<evidence type="ECO:0000255" key="1">
    <source>
        <dbReference type="HAMAP-Rule" id="MF_00405"/>
    </source>
</evidence>
<dbReference type="EC" id="4.2.1.59" evidence="1"/>
<dbReference type="EC" id="5.3.3.14" evidence="1"/>
<dbReference type="EMBL" id="CP001144">
    <property type="protein sequence ID" value="ACH75942.1"/>
    <property type="molecule type" value="Genomic_DNA"/>
</dbReference>
<dbReference type="RefSeq" id="WP_000227928.1">
    <property type="nucleotide sequence ID" value="NC_011205.1"/>
</dbReference>
<dbReference type="SMR" id="B5FQZ7"/>
<dbReference type="KEGG" id="sed:SeD_A1142"/>
<dbReference type="HOGENOM" id="CLU_097925_0_0_6"/>
<dbReference type="UniPathway" id="UPA00094"/>
<dbReference type="Proteomes" id="UP000008322">
    <property type="component" value="Chromosome"/>
</dbReference>
<dbReference type="GO" id="GO:0005737">
    <property type="term" value="C:cytoplasm"/>
    <property type="evidence" value="ECO:0007669"/>
    <property type="project" value="UniProtKB-SubCell"/>
</dbReference>
<dbReference type="GO" id="GO:0019171">
    <property type="term" value="F:(3R)-hydroxyacyl-[acyl-carrier-protein] dehydratase activity"/>
    <property type="evidence" value="ECO:0007669"/>
    <property type="project" value="UniProtKB-UniRule"/>
</dbReference>
<dbReference type="GO" id="GO:0034017">
    <property type="term" value="F:trans-2-decenoyl-acyl-carrier-protein isomerase activity"/>
    <property type="evidence" value="ECO:0007669"/>
    <property type="project" value="UniProtKB-UniRule"/>
</dbReference>
<dbReference type="GO" id="GO:0006636">
    <property type="term" value="P:unsaturated fatty acid biosynthetic process"/>
    <property type="evidence" value="ECO:0007669"/>
    <property type="project" value="UniProtKB-UniRule"/>
</dbReference>
<dbReference type="CDD" id="cd01287">
    <property type="entry name" value="FabA"/>
    <property type="match status" value="1"/>
</dbReference>
<dbReference type="FunFam" id="3.10.129.10:FF:000003">
    <property type="entry name" value="3-hydroxydecanoyl-[acyl-carrier-protein] dehydratase"/>
    <property type="match status" value="1"/>
</dbReference>
<dbReference type="Gene3D" id="3.10.129.10">
    <property type="entry name" value="Hotdog Thioesterase"/>
    <property type="match status" value="1"/>
</dbReference>
<dbReference type="HAMAP" id="MF_00405">
    <property type="entry name" value="FabA"/>
    <property type="match status" value="1"/>
</dbReference>
<dbReference type="InterPro" id="IPR010083">
    <property type="entry name" value="FabA"/>
</dbReference>
<dbReference type="InterPro" id="IPR013114">
    <property type="entry name" value="FabA_FabZ"/>
</dbReference>
<dbReference type="InterPro" id="IPR029069">
    <property type="entry name" value="HotDog_dom_sf"/>
</dbReference>
<dbReference type="NCBIfam" id="TIGR01749">
    <property type="entry name" value="fabA"/>
    <property type="match status" value="1"/>
</dbReference>
<dbReference type="NCBIfam" id="NF003509">
    <property type="entry name" value="PRK05174.1"/>
    <property type="match status" value="1"/>
</dbReference>
<dbReference type="PANTHER" id="PTHR30272">
    <property type="entry name" value="3-HYDROXYACYL-[ACYL-CARRIER-PROTEIN] DEHYDRATASE"/>
    <property type="match status" value="1"/>
</dbReference>
<dbReference type="PANTHER" id="PTHR30272:SF8">
    <property type="entry name" value="3-HYDROXYDECANOYL-[ACYL-CARRIER-PROTEIN] DEHYDRATASE"/>
    <property type="match status" value="1"/>
</dbReference>
<dbReference type="Pfam" id="PF07977">
    <property type="entry name" value="FabA"/>
    <property type="match status" value="1"/>
</dbReference>
<dbReference type="SUPFAM" id="SSF54637">
    <property type="entry name" value="Thioesterase/thiol ester dehydrase-isomerase"/>
    <property type="match status" value="1"/>
</dbReference>
<protein>
    <recommendedName>
        <fullName evidence="1">3-hydroxydecanoyl-[acyl-carrier-protein] dehydratase</fullName>
        <ecNumber evidence="1">4.2.1.59</ecNumber>
    </recommendedName>
    <alternativeName>
        <fullName evidence="1">3-hydroxyacyl-[acyl-carrier-protein] dehydratase FabA</fullName>
    </alternativeName>
    <alternativeName>
        <fullName evidence="1">Beta-hydroxydecanoyl thioester dehydrase</fullName>
    </alternativeName>
    <alternativeName>
        <fullName evidence="1">Trans-2-decenoyl-[acyl-carrier-protein] isomerase</fullName>
        <ecNumber evidence="1">5.3.3.14</ecNumber>
    </alternativeName>
</protein>
<gene>
    <name evidence="1" type="primary">fabA</name>
    <name type="ordered locus">SeD_A1142</name>
</gene>
<sequence>MVDKRESYTKEDLLASGRGELFGAKGPQLPAPNMLMMDRVVKMTETGGNFDKGYVEAELDINPDLWFFGCHFIGDPVMPGCLGLDAMWQLVGFYLGWLGGEGKGRALGVGEVKFTGQVLPTARKVTYRIHFKRIVNRRLIMGLADGEVLVDGRLIYTAHDLKVGLFQDTSAF</sequence>
<organism>
    <name type="scientific">Salmonella dublin (strain CT_02021853)</name>
    <dbReference type="NCBI Taxonomy" id="439851"/>
    <lineage>
        <taxon>Bacteria</taxon>
        <taxon>Pseudomonadati</taxon>
        <taxon>Pseudomonadota</taxon>
        <taxon>Gammaproteobacteria</taxon>
        <taxon>Enterobacterales</taxon>
        <taxon>Enterobacteriaceae</taxon>
        <taxon>Salmonella</taxon>
    </lineage>
</organism>
<feature type="chain" id="PRO_1000201199" description="3-hydroxydecanoyl-[acyl-carrier-protein] dehydratase">
    <location>
        <begin position="1"/>
        <end position="172"/>
    </location>
</feature>
<feature type="active site" evidence="1">
    <location>
        <position position="71"/>
    </location>
</feature>
<proteinExistence type="inferred from homology"/>
<comment type="function">
    <text evidence="1">Necessary for the introduction of cis unsaturation into fatty acids. Catalyzes the dehydration of (3R)-3-hydroxydecanoyl-ACP to E-(2)-decenoyl-ACP and then its isomerization to Z-(3)-decenoyl-ACP. Can catalyze the dehydratase reaction for beta-hydroxyacyl-ACPs with saturated chain lengths up to 16:0, being most active on intermediate chain length.</text>
</comment>
<comment type="catalytic activity">
    <reaction evidence="1">
        <text>a (3R)-hydroxyacyl-[ACP] = a (2E)-enoyl-[ACP] + H2O</text>
        <dbReference type="Rhea" id="RHEA:13097"/>
        <dbReference type="Rhea" id="RHEA-COMP:9925"/>
        <dbReference type="Rhea" id="RHEA-COMP:9945"/>
        <dbReference type="ChEBI" id="CHEBI:15377"/>
        <dbReference type="ChEBI" id="CHEBI:78784"/>
        <dbReference type="ChEBI" id="CHEBI:78827"/>
        <dbReference type="EC" id="4.2.1.59"/>
    </reaction>
</comment>
<comment type="catalytic activity">
    <reaction evidence="1">
        <text>(3R)-hydroxydecanoyl-[ACP] = (2E)-decenoyl-[ACP] + H2O</text>
        <dbReference type="Rhea" id="RHEA:41860"/>
        <dbReference type="Rhea" id="RHEA-COMP:9638"/>
        <dbReference type="Rhea" id="RHEA-COMP:9639"/>
        <dbReference type="ChEBI" id="CHEBI:15377"/>
        <dbReference type="ChEBI" id="CHEBI:78466"/>
        <dbReference type="ChEBI" id="CHEBI:78467"/>
    </reaction>
</comment>
<comment type="catalytic activity">
    <reaction evidence="1">
        <text>(2E)-decenoyl-[ACP] = (3Z)-decenoyl-[ACP]</text>
        <dbReference type="Rhea" id="RHEA:23568"/>
        <dbReference type="Rhea" id="RHEA-COMP:9639"/>
        <dbReference type="Rhea" id="RHEA-COMP:9927"/>
        <dbReference type="ChEBI" id="CHEBI:78467"/>
        <dbReference type="ChEBI" id="CHEBI:78798"/>
        <dbReference type="EC" id="5.3.3.14"/>
    </reaction>
</comment>
<comment type="pathway">
    <text evidence="1">Lipid metabolism; fatty acid biosynthesis.</text>
</comment>
<comment type="subunit">
    <text evidence="1">Homodimer.</text>
</comment>
<comment type="subcellular location">
    <subcellularLocation>
        <location evidence="1">Cytoplasm</location>
    </subcellularLocation>
</comment>
<comment type="similarity">
    <text evidence="1">Belongs to the thioester dehydratase family. FabA subfamily.</text>
</comment>
<keyword id="KW-0963">Cytoplasm</keyword>
<keyword id="KW-0275">Fatty acid biosynthesis</keyword>
<keyword id="KW-0276">Fatty acid metabolism</keyword>
<keyword id="KW-0413">Isomerase</keyword>
<keyword id="KW-0444">Lipid biosynthesis</keyword>
<keyword id="KW-0443">Lipid metabolism</keyword>
<keyword id="KW-0456">Lyase</keyword>
<reference key="1">
    <citation type="journal article" date="2011" name="J. Bacteriol.">
        <title>Comparative genomics of 28 Salmonella enterica isolates: evidence for CRISPR-mediated adaptive sublineage evolution.</title>
        <authorList>
            <person name="Fricke W.F."/>
            <person name="Mammel M.K."/>
            <person name="McDermott P.F."/>
            <person name="Tartera C."/>
            <person name="White D.G."/>
            <person name="Leclerc J.E."/>
            <person name="Ravel J."/>
            <person name="Cebula T.A."/>
        </authorList>
    </citation>
    <scope>NUCLEOTIDE SEQUENCE [LARGE SCALE GENOMIC DNA]</scope>
    <source>
        <strain>CT_02021853</strain>
    </source>
</reference>
<accession>B5FQZ7</accession>
<name>FABA_SALDC</name>